<dbReference type="EC" id="1.13.11.54" evidence="1"/>
<dbReference type="EC" id="1.13.11.53" evidence="1"/>
<dbReference type="FunCoup" id="F6W3G8">
    <property type="interactions" value="72"/>
</dbReference>
<dbReference type="STRING" id="7719.ENSCINP00000009496"/>
<dbReference type="eggNOG" id="KOG2107">
    <property type="taxonomic scope" value="Eukaryota"/>
</dbReference>
<dbReference type="InParanoid" id="F6W3G8"/>
<dbReference type="UniPathway" id="UPA00904">
    <property type="reaction ID" value="UER00878"/>
</dbReference>
<dbReference type="Proteomes" id="UP000008144">
    <property type="component" value="Unplaced"/>
</dbReference>
<dbReference type="GO" id="GO:0005737">
    <property type="term" value="C:cytoplasm"/>
    <property type="evidence" value="ECO:0007669"/>
    <property type="project" value="UniProtKB-SubCell"/>
</dbReference>
<dbReference type="GO" id="GO:0005634">
    <property type="term" value="C:nucleus"/>
    <property type="evidence" value="ECO:0007669"/>
    <property type="project" value="UniProtKB-SubCell"/>
</dbReference>
<dbReference type="GO" id="GO:0010308">
    <property type="term" value="F:acireductone dioxygenase (Ni2+-requiring) activity"/>
    <property type="evidence" value="ECO:0007669"/>
    <property type="project" value="UniProtKB-UniRule"/>
</dbReference>
<dbReference type="GO" id="GO:0010309">
    <property type="term" value="F:acireductone dioxygenase [iron(II)-requiring] activity"/>
    <property type="evidence" value="ECO:0000318"/>
    <property type="project" value="GO_Central"/>
</dbReference>
<dbReference type="GO" id="GO:0005506">
    <property type="term" value="F:iron ion binding"/>
    <property type="evidence" value="ECO:0007669"/>
    <property type="project" value="UniProtKB-UniRule"/>
</dbReference>
<dbReference type="GO" id="GO:0016151">
    <property type="term" value="F:nickel cation binding"/>
    <property type="evidence" value="ECO:0007669"/>
    <property type="project" value="UniProtKB-UniRule"/>
</dbReference>
<dbReference type="GO" id="GO:0019509">
    <property type="term" value="P:L-methionine salvage from methylthioadenosine"/>
    <property type="evidence" value="ECO:0007669"/>
    <property type="project" value="UniProtKB-UniRule"/>
</dbReference>
<dbReference type="GO" id="GO:0006555">
    <property type="term" value="P:methionine metabolic process"/>
    <property type="evidence" value="ECO:0000318"/>
    <property type="project" value="GO_Central"/>
</dbReference>
<dbReference type="CDD" id="cd02232">
    <property type="entry name" value="cupin_ARD"/>
    <property type="match status" value="1"/>
</dbReference>
<dbReference type="FunFam" id="2.60.120.10:FF:000031">
    <property type="entry name" value="1,2-dihydroxy-3-keto-5-methylthiopentene dioxygenase"/>
    <property type="match status" value="1"/>
</dbReference>
<dbReference type="Gene3D" id="2.60.120.10">
    <property type="entry name" value="Jelly Rolls"/>
    <property type="match status" value="1"/>
</dbReference>
<dbReference type="HAMAP" id="MF_03154">
    <property type="entry name" value="Salvage_MtnD_euk"/>
    <property type="match status" value="1"/>
</dbReference>
<dbReference type="InterPro" id="IPR004313">
    <property type="entry name" value="ARD"/>
</dbReference>
<dbReference type="InterPro" id="IPR027496">
    <property type="entry name" value="ARD_euk"/>
</dbReference>
<dbReference type="InterPro" id="IPR014710">
    <property type="entry name" value="RmlC-like_jellyroll"/>
</dbReference>
<dbReference type="InterPro" id="IPR011051">
    <property type="entry name" value="RmlC_Cupin_sf"/>
</dbReference>
<dbReference type="PANTHER" id="PTHR23418">
    <property type="entry name" value="ACIREDUCTONE DIOXYGENASE"/>
    <property type="match status" value="1"/>
</dbReference>
<dbReference type="PANTHER" id="PTHR23418:SF0">
    <property type="entry name" value="ACIREDUCTONE DIOXYGENASE"/>
    <property type="match status" value="1"/>
</dbReference>
<dbReference type="Pfam" id="PF03079">
    <property type="entry name" value="ARD"/>
    <property type="match status" value="1"/>
</dbReference>
<dbReference type="SUPFAM" id="SSF51182">
    <property type="entry name" value="RmlC-like cupins"/>
    <property type="match status" value="1"/>
</dbReference>
<reference key="1">
    <citation type="journal article" date="2002" name="Science">
        <title>The draft genome of Ciona intestinalis: insights into chordate and vertebrate origins.</title>
        <authorList>
            <person name="Dehal P."/>
            <person name="Satou Y."/>
            <person name="Campbell R.K."/>
            <person name="Chapman J."/>
            <person name="Degnan B."/>
            <person name="De Tomaso A."/>
            <person name="Davidson B."/>
            <person name="Di Gregorio A."/>
            <person name="Gelpke M."/>
            <person name="Goodstein D.M."/>
            <person name="Harafuji N."/>
            <person name="Hastings K.E."/>
            <person name="Ho I."/>
            <person name="Hotta K."/>
            <person name="Huang W."/>
            <person name="Kawashima T."/>
            <person name="Lemaire P."/>
            <person name="Martinez D."/>
            <person name="Meinertzhagen I.A."/>
            <person name="Necula S."/>
            <person name="Nonaka M."/>
            <person name="Putnam N."/>
            <person name="Rash S."/>
            <person name="Saiga H."/>
            <person name="Satake M."/>
            <person name="Terry A."/>
            <person name="Yamada L."/>
            <person name="Wang H.G."/>
            <person name="Awazu S."/>
            <person name="Azumi K."/>
            <person name="Boore J."/>
            <person name="Branno M."/>
            <person name="Chin-Bow S."/>
            <person name="DeSantis R."/>
            <person name="Doyle S."/>
            <person name="Francino P."/>
            <person name="Keys D.N."/>
            <person name="Haga S."/>
            <person name="Hayashi H."/>
            <person name="Hino K."/>
            <person name="Imai K.S."/>
            <person name="Inaba K."/>
            <person name="Kano S."/>
            <person name="Kobayashi K."/>
            <person name="Kobayashi M."/>
            <person name="Lee B.I."/>
            <person name="Makabe K.W."/>
            <person name="Manohar C."/>
            <person name="Matassi G."/>
            <person name="Medina M."/>
            <person name="Mochizuki Y."/>
            <person name="Mount S."/>
            <person name="Morishita T."/>
            <person name="Miura S."/>
            <person name="Nakayama A."/>
            <person name="Nishizaka S."/>
            <person name="Nomoto H."/>
            <person name="Ohta F."/>
            <person name="Oishi K."/>
            <person name="Rigoutsos I."/>
            <person name="Sano M."/>
            <person name="Sasaki A."/>
            <person name="Sasakura Y."/>
            <person name="Shoguchi E."/>
            <person name="Shin-i T."/>
            <person name="Spagnuolo A."/>
            <person name="Stainier D."/>
            <person name="Suzuki M.M."/>
            <person name="Tassy O."/>
            <person name="Takatori N."/>
            <person name="Tokuoka M."/>
            <person name="Yagi K."/>
            <person name="Yoshizaki F."/>
            <person name="Wada S."/>
            <person name="Zhang C."/>
            <person name="Hyatt P.D."/>
            <person name="Larimer F."/>
            <person name="Detter C."/>
            <person name="Doggett N."/>
            <person name="Glavina T."/>
            <person name="Hawkins T."/>
            <person name="Richardson P."/>
            <person name="Lucas S."/>
            <person name="Kohara Y."/>
            <person name="Levine M."/>
            <person name="Satoh N."/>
            <person name="Rokhsar D.S."/>
        </authorList>
    </citation>
    <scope>NUCLEOTIDE SEQUENCE [LARGE SCALE GENOMIC DNA]</scope>
</reference>
<evidence type="ECO:0000255" key="1">
    <source>
        <dbReference type="HAMAP-Rule" id="MF_03154"/>
    </source>
</evidence>
<proteinExistence type="inferred from homology"/>
<comment type="function">
    <text evidence="1">Catalyzes 2 different reactions between oxygen and the acireductone 1,2-dihydroxy-3-keto-5-methylthiopentene (DHK-MTPene) depending upon the metal bound in the active site. Fe-containing acireductone dioxygenase (Fe-ARD) produces formate and 2-keto-4-methylthiobutyrate (KMTB), the alpha-ketoacid precursor of methionine in the methionine recycle pathway. Ni-containing acireductone dioxygenase (Ni-ARD) produces methylthiopropionate, carbon monoxide and formate, and does not lie on the methionine recycle pathway.</text>
</comment>
<comment type="catalytic activity">
    <reaction evidence="1">
        <text>1,2-dihydroxy-5-(methylsulfanyl)pent-1-en-3-one + O2 = 4-methylsulfanyl-2-oxobutanoate + formate + 2 H(+)</text>
        <dbReference type="Rhea" id="RHEA:24504"/>
        <dbReference type="ChEBI" id="CHEBI:15378"/>
        <dbReference type="ChEBI" id="CHEBI:15379"/>
        <dbReference type="ChEBI" id="CHEBI:15740"/>
        <dbReference type="ChEBI" id="CHEBI:16723"/>
        <dbReference type="ChEBI" id="CHEBI:49252"/>
        <dbReference type="EC" id="1.13.11.54"/>
    </reaction>
</comment>
<comment type="catalytic activity">
    <reaction evidence="1">
        <text>1,2-dihydroxy-5-(methylsulfanyl)pent-1-en-3-one + O2 = 3-(methylsulfanyl)propanoate + CO + formate + 2 H(+)</text>
        <dbReference type="Rhea" id="RHEA:14161"/>
        <dbReference type="ChEBI" id="CHEBI:15378"/>
        <dbReference type="ChEBI" id="CHEBI:15379"/>
        <dbReference type="ChEBI" id="CHEBI:15740"/>
        <dbReference type="ChEBI" id="CHEBI:17245"/>
        <dbReference type="ChEBI" id="CHEBI:49016"/>
        <dbReference type="ChEBI" id="CHEBI:49252"/>
        <dbReference type="EC" id="1.13.11.53"/>
    </reaction>
</comment>
<comment type="cofactor">
    <cofactor evidence="1">
        <name>Fe(2+)</name>
        <dbReference type="ChEBI" id="CHEBI:29033"/>
    </cofactor>
    <cofactor evidence="1">
        <name>Ni(2+)</name>
        <dbReference type="ChEBI" id="CHEBI:49786"/>
    </cofactor>
    <text evidence="1">Binds either 1 Fe or Ni cation per monomer. Iron-binding promotes an acireductone dioxygenase reaction producing 2-keto-4-methylthiobutyrate, while nickel-binding promotes an acireductone dioxygenase reaction producing 3-(methylsulfanyl)propanoate.</text>
</comment>
<comment type="pathway">
    <text evidence="1">Amino-acid biosynthesis; L-methionine biosynthesis via salvage pathway; L-methionine from S-methyl-5-thio-alpha-D-ribose 1-phosphate: step 5/6.</text>
</comment>
<comment type="subcellular location">
    <subcellularLocation>
        <location evidence="1">Cytoplasm</location>
    </subcellularLocation>
    <subcellularLocation>
        <location evidence="1">Nucleus</location>
    </subcellularLocation>
</comment>
<comment type="similarity">
    <text evidence="1">Belongs to the acireductone dioxygenase (ARD) family.</text>
</comment>
<name>MTND_CIOIN</name>
<keyword id="KW-0028">Amino-acid biosynthesis</keyword>
<keyword id="KW-0963">Cytoplasm</keyword>
<keyword id="KW-0223">Dioxygenase</keyword>
<keyword id="KW-0408">Iron</keyword>
<keyword id="KW-0479">Metal-binding</keyword>
<keyword id="KW-0486">Methionine biosynthesis</keyword>
<keyword id="KW-0533">Nickel</keyword>
<keyword id="KW-0539">Nucleus</keyword>
<keyword id="KW-0560">Oxidoreductase</keyword>
<keyword id="KW-1185">Reference proteome</keyword>
<sequence length="184" mass="21565">MVRAWRILQEETDDPRDALYSDESVSLEQLAQVGVEYFKFDADTFEQNDDYLKLKNNRGYSYSDTISVSRATLPDFDAKIKSFFEEHLHTDDEIRFILDGSGYFDVRDLDGRQLRDCWIRIECVKGDLLVLPSGIYHRFTLDKKDYIKALRLFIGVPVWTPHNRPADSMKERLDYVSKYLTATT</sequence>
<organism>
    <name type="scientific">Ciona intestinalis</name>
    <name type="common">Transparent sea squirt</name>
    <name type="synonym">Ascidia intestinalis</name>
    <dbReference type="NCBI Taxonomy" id="7719"/>
    <lineage>
        <taxon>Eukaryota</taxon>
        <taxon>Metazoa</taxon>
        <taxon>Chordata</taxon>
        <taxon>Tunicata</taxon>
        <taxon>Ascidiacea</taxon>
        <taxon>Phlebobranchia</taxon>
        <taxon>Cionidae</taxon>
        <taxon>Ciona</taxon>
    </lineage>
</organism>
<feature type="chain" id="PRO_0000414331" description="Acireductone dioxygenase">
    <location>
        <begin position="1"/>
        <end position="184"/>
    </location>
</feature>
<feature type="binding site" evidence="1">
    <location>
        <position position="87"/>
    </location>
    <ligand>
        <name>Fe(2+)</name>
        <dbReference type="ChEBI" id="CHEBI:29033"/>
        <note>for iron-dependent acireductone dioxygenase activity</note>
    </ligand>
</feature>
<feature type="binding site" evidence="1">
    <location>
        <position position="87"/>
    </location>
    <ligand>
        <name>Ni(2+)</name>
        <dbReference type="ChEBI" id="CHEBI:49786"/>
        <note>for nickel-dependent acireductone dioxygenase activity</note>
    </ligand>
</feature>
<feature type="binding site" evidence="1">
    <location>
        <position position="89"/>
    </location>
    <ligand>
        <name>Fe(2+)</name>
        <dbReference type="ChEBI" id="CHEBI:29033"/>
        <note>for iron-dependent acireductone dioxygenase activity</note>
    </ligand>
</feature>
<feature type="binding site" evidence="1">
    <location>
        <position position="89"/>
    </location>
    <ligand>
        <name>Ni(2+)</name>
        <dbReference type="ChEBI" id="CHEBI:49786"/>
        <note>for nickel-dependent acireductone dioxygenase activity</note>
    </ligand>
</feature>
<feature type="binding site" evidence="1">
    <location>
        <position position="93"/>
    </location>
    <ligand>
        <name>Fe(2+)</name>
        <dbReference type="ChEBI" id="CHEBI:29033"/>
        <note>for iron-dependent acireductone dioxygenase activity</note>
    </ligand>
</feature>
<feature type="binding site" evidence="1">
    <location>
        <position position="93"/>
    </location>
    <ligand>
        <name>Ni(2+)</name>
        <dbReference type="ChEBI" id="CHEBI:49786"/>
        <note>for nickel-dependent acireductone dioxygenase activity</note>
    </ligand>
</feature>
<feature type="binding site" evidence="1">
    <location>
        <position position="137"/>
    </location>
    <ligand>
        <name>Fe(2+)</name>
        <dbReference type="ChEBI" id="CHEBI:29033"/>
        <note>for iron-dependent acireductone dioxygenase activity</note>
    </ligand>
</feature>
<feature type="binding site" evidence="1">
    <location>
        <position position="137"/>
    </location>
    <ligand>
        <name>Ni(2+)</name>
        <dbReference type="ChEBI" id="CHEBI:49786"/>
        <note>for nickel-dependent acireductone dioxygenase activity</note>
    </ligand>
</feature>
<protein>
    <recommendedName>
        <fullName evidence="1">Acireductone dioxygenase</fullName>
    </recommendedName>
    <alternativeName>
        <fullName evidence="1">Acireductone dioxygenase (Fe(2+)-requiring)</fullName>
        <shortName evidence="1">ARD'</shortName>
        <shortName evidence="1">Fe-ARD</shortName>
        <ecNumber evidence="1">1.13.11.54</ecNumber>
    </alternativeName>
    <alternativeName>
        <fullName evidence="1">Acireductone dioxygenase (Ni(2+)-requiring)</fullName>
        <shortName evidence="1">ARD</shortName>
        <shortName evidence="1">Ni-ARD</shortName>
        <ecNumber evidence="1">1.13.11.53</ecNumber>
    </alternativeName>
</protein>
<accession>F6W3G8</accession>